<protein>
    <recommendedName>
        <fullName>Translocation protein SEC62</fullName>
    </recommendedName>
    <alternativeName>
        <fullName>Translocation protein 1</fullName>
        <shortName>TP-1</shortName>
    </alternativeName>
</protein>
<comment type="function">
    <text evidence="1">Mediates post-translational transport of precursor polypeptides across endoplasmic reticulum (ER). Proposed to act as a targeting receptor for small presecretory proteins containing short and apolar signal peptides. Targets and properly positions newly synthesized presecretory proteins into the SEC61 channel-forming translocon complex, triggering channel opening for polypeptide translocation to the ER lumen.</text>
</comment>
<comment type="subunit">
    <text evidence="1 2 3">The ER translocon complex that consists of channel-forming core components SEC61A1, SEC61B and SEC61G and different auxiliary components such as SEC62 and SEC63 (PubMed:10799540, PubMed:10860986). Interacts with SEC61B (By similarity).</text>
</comment>
<comment type="subcellular location">
    <subcellularLocation>
        <location>Endoplasmic reticulum membrane</location>
        <topology>Multi-pass membrane protein</topology>
    </subcellularLocation>
</comment>
<comment type="tissue specificity">
    <text>Pancreas.</text>
</comment>
<comment type="similarity">
    <text evidence="4">Belongs to the SEC62 family.</text>
</comment>
<organism>
    <name type="scientific">Canis lupus familiaris</name>
    <name type="common">Dog</name>
    <name type="synonym">Canis familiaris</name>
    <dbReference type="NCBI Taxonomy" id="9615"/>
    <lineage>
        <taxon>Eukaryota</taxon>
        <taxon>Metazoa</taxon>
        <taxon>Chordata</taxon>
        <taxon>Craniata</taxon>
        <taxon>Vertebrata</taxon>
        <taxon>Euteleostomi</taxon>
        <taxon>Mammalia</taxon>
        <taxon>Eutheria</taxon>
        <taxon>Laurasiatheria</taxon>
        <taxon>Carnivora</taxon>
        <taxon>Caniformia</taxon>
        <taxon>Canidae</taxon>
        <taxon>Canis</taxon>
    </lineage>
</organism>
<accession>P82009</accession>
<proteinExistence type="evidence at protein level"/>
<name>SEC62_CANLF</name>
<reference key="1">
    <citation type="journal article" date="2000" name="Proc. Natl. Acad. Sci. U.S.A.">
        <title>Homologs of the yeast Sec complex subunits Sec62p and Sec63p are abundant proteins in dog pancreas microsomes.</title>
        <authorList>
            <person name="Tyedmers J."/>
            <person name="Lerner M."/>
            <person name="Bies C."/>
            <person name="Dudek J."/>
            <person name="Skowronek M.H."/>
            <person name="Haas I.G."/>
            <person name="Heim N."/>
            <person name="Nastainczyk W."/>
            <person name="Volkmer J."/>
            <person name="Zimmermann R."/>
        </authorList>
    </citation>
    <scope>PROTEIN SEQUENCE</scope>
    <scope>SUBUNIT</scope>
    <source>
        <tissue>Pancreas</tissue>
    </source>
</reference>
<reference key="2">
    <citation type="journal article" date="2000" name="J. Biol. Chem.">
        <title>Mammalian Sec61 is associated with Sec62 and Sec63.</title>
        <authorList>
            <person name="Meyer H.-A."/>
            <person name="Grau H."/>
            <person name="Kraft R."/>
            <person name="Kostka S."/>
            <person name="Prehn S."/>
            <person name="Kalies K.-U."/>
            <person name="Hartmann E."/>
        </authorList>
    </citation>
    <scope>SUBUNIT</scope>
</reference>
<gene>
    <name type="primary">SEC62</name>
    <name type="synonym">TLOC1</name>
</gene>
<feature type="chain" id="PRO_0000206615" description="Translocation protein SEC62">
    <location>
        <begin position="1" status="less than"/>
        <end position="39" status="greater than"/>
    </location>
</feature>
<feature type="non-consecutive residues" evidence="4">
    <location>
        <begin position="18"/>
        <end position="19"/>
    </location>
</feature>
<feature type="non-terminal residue">
    <location>
        <position position="1"/>
    </location>
</feature>
<feature type="non-terminal residue">
    <location>
        <position position="39"/>
    </location>
</feature>
<sequence length="39" mass="4498">MGHRVDYFIASKAVDXLLMKYDKDIKKEKEKGKAESGKE</sequence>
<dbReference type="FunCoup" id="P82009">
    <property type="interactions" value="1689"/>
</dbReference>
<dbReference type="eggNOG" id="KOG2927">
    <property type="taxonomic scope" value="Eukaryota"/>
</dbReference>
<dbReference type="InParanoid" id="P82009"/>
<dbReference type="OrthoDB" id="200187at2759"/>
<dbReference type="Proteomes" id="UP000002254">
    <property type="component" value="Unplaced"/>
</dbReference>
<dbReference type="Proteomes" id="UP000694429">
    <property type="component" value="Unplaced"/>
</dbReference>
<dbReference type="Proteomes" id="UP000694542">
    <property type="component" value="Unplaced"/>
</dbReference>
<dbReference type="Proteomes" id="UP000805418">
    <property type="component" value="Unplaced"/>
</dbReference>
<dbReference type="GO" id="GO:0005789">
    <property type="term" value="C:endoplasmic reticulum membrane"/>
    <property type="evidence" value="ECO:0007669"/>
    <property type="project" value="UniProtKB-SubCell"/>
</dbReference>
<dbReference type="GO" id="GO:0031204">
    <property type="term" value="P:post-translational protein targeting to membrane, translocation"/>
    <property type="evidence" value="ECO:0000250"/>
    <property type="project" value="UniProtKB"/>
</dbReference>
<evidence type="ECO:0000250" key="1">
    <source>
        <dbReference type="UniProtKB" id="Q99442"/>
    </source>
</evidence>
<evidence type="ECO:0000269" key="2">
    <source>
    </source>
</evidence>
<evidence type="ECO:0000269" key="3">
    <source>
    </source>
</evidence>
<evidence type="ECO:0000305" key="4"/>
<keyword id="KW-0903">Direct protein sequencing</keyword>
<keyword id="KW-0256">Endoplasmic reticulum</keyword>
<keyword id="KW-0472">Membrane</keyword>
<keyword id="KW-0653">Protein transport</keyword>
<keyword id="KW-1185">Reference proteome</keyword>
<keyword id="KW-0811">Translocation</keyword>
<keyword id="KW-0812">Transmembrane</keyword>
<keyword id="KW-0813">Transport</keyword>